<sequence>MVAQRTFVMIKPDGVKRGLIGEIISRFEKRGLKIVSLKMVKMSRDTAEKLYEEHKGKSFFEELVNYVTSGPVVCMVIEGDDVVQVIRRMIGNTDPKEAPPGTIRGDYALSKSENVIHASDSIEKAQREMSLFFDKSDL</sequence>
<feature type="chain" id="PRO_0000137102" description="Nucleoside diphosphate kinase">
    <location>
        <begin position="1"/>
        <end position="138"/>
    </location>
</feature>
<feature type="active site" description="Pros-phosphohistidine intermediate" evidence="1">
    <location>
        <position position="117"/>
    </location>
</feature>
<feature type="binding site" evidence="1">
    <location>
        <position position="11"/>
    </location>
    <ligand>
        <name>ATP</name>
        <dbReference type="ChEBI" id="CHEBI:30616"/>
    </ligand>
</feature>
<feature type="binding site" evidence="1">
    <location>
        <position position="59"/>
    </location>
    <ligand>
        <name>ATP</name>
        <dbReference type="ChEBI" id="CHEBI:30616"/>
    </ligand>
</feature>
<feature type="binding site" evidence="1">
    <location>
        <position position="87"/>
    </location>
    <ligand>
        <name>ATP</name>
        <dbReference type="ChEBI" id="CHEBI:30616"/>
    </ligand>
</feature>
<feature type="binding site" evidence="1">
    <location>
        <position position="93"/>
    </location>
    <ligand>
        <name>ATP</name>
        <dbReference type="ChEBI" id="CHEBI:30616"/>
    </ligand>
</feature>
<feature type="binding site" evidence="1">
    <location>
        <position position="104"/>
    </location>
    <ligand>
        <name>ATP</name>
        <dbReference type="ChEBI" id="CHEBI:30616"/>
    </ligand>
</feature>
<feature type="binding site" evidence="1">
    <location>
        <position position="114"/>
    </location>
    <ligand>
        <name>ATP</name>
        <dbReference type="ChEBI" id="CHEBI:30616"/>
    </ligand>
</feature>
<accession>Q980Q7</accession>
<evidence type="ECO:0000255" key="1">
    <source>
        <dbReference type="HAMAP-Rule" id="MF_00451"/>
    </source>
</evidence>
<reference key="1">
    <citation type="journal article" date="2001" name="Proc. Natl. Acad. Sci. U.S.A.">
        <title>The complete genome of the crenarchaeon Sulfolobus solfataricus P2.</title>
        <authorList>
            <person name="She Q."/>
            <person name="Singh R.K."/>
            <person name="Confalonieri F."/>
            <person name="Zivanovic Y."/>
            <person name="Allard G."/>
            <person name="Awayez M.J."/>
            <person name="Chan-Weiher C.C.-Y."/>
            <person name="Clausen I.G."/>
            <person name="Curtis B.A."/>
            <person name="De Moors A."/>
            <person name="Erauso G."/>
            <person name="Fletcher C."/>
            <person name="Gordon P.M.K."/>
            <person name="Heikamp-de Jong I."/>
            <person name="Jeffries A.C."/>
            <person name="Kozera C.J."/>
            <person name="Medina N."/>
            <person name="Peng X."/>
            <person name="Thi-Ngoc H.P."/>
            <person name="Redder P."/>
            <person name="Schenk M.E."/>
            <person name="Theriault C."/>
            <person name="Tolstrup N."/>
            <person name="Charlebois R.L."/>
            <person name="Doolittle W.F."/>
            <person name="Duguet M."/>
            <person name="Gaasterland T."/>
            <person name="Garrett R.A."/>
            <person name="Ragan M.A."/>
            <person name="Sensen C.W."/>
            <person name="Van der Oost J."/>
        </authorList>
    </citation>
    <scope>NUCLEOTIDE SEQUENCE [LARGE SCALE GENOMIC DNA]</scope>
    <source>
        <strain>ATCC 35092 / DSM 1617 / JCM 11322 / P2</strain>
    </source>
</reference>
<name>NDK_SACS2</name>
<keyword id="KW-0067">ATP-binding</keyword>
<keyword id="KW-0963">Cytoplasm</keyword>
<keyword id="KW-0418">Kinase</keyword>
<keyword id="KW-0460">Magnesium</keyword>
<keyword id="KW-0479">Metal-binding</keyword>
<keyword id="KW-0546">Nucleotide metabolism</keyword>
<keyword id="KW-0547">Nucleotide-binding</keyword>
<keyword id="KW-0597">Phosphoprotein</keyword>
<keyword id="KW-1185">Reference proteome</keyword>
<keyword id="KW-0808">Transferase</keyword>
<protein>
    <recommendedName>
        <fullName evidence="1">Nucleoside diphosphate kinase</fullName>
        <shortName evidence="1">NDK</shortName>
        <shortName evidence="1">NDP kinase</shortName>
        <ecNumber evidence="1">2.7.4.6</ecNumber>
    </recommendedName>
    <alternativeName>
        <fullName evidence="1">Nucleoside-2-P kinase</fullName>
    </alternativeName>
</protein>
<proteinExistence type="inferred from homology"/>
<comment type="function">
    <text evidence="1">Major role in the synthesis of nucleoside triphosphates other than ATP. The ATP gamma phosphate is transferred to the NDP beta phosphate via a ping-pong mechanism, using a phosphorylated active-site intermediate.</text>
</comment>
<comment type="catalytic activity">
    <reaction evidence="1">
        <text>a 2'-deoxyribonucleoside 5'-diphosphate + ATP = a 2'-deoxyribonucleoside 5'-triphosphate + ADP</text>
        <dbReference type="Rhea" id="RHEA:44640"/>
        <dbReference type="ChEBI" id="CHEBI:30616"/>
        <dbReference type="ChEBI" id="CHEBI:61560"/>
        <dbReference type="ChEBI" id="CHEBI:73316"/>
        <dbReference type="ChEBI" id="CHEBI:456216"/>
        <dbReference type="EC" id="2.7.4.6"/>
    </reaction>
</comment>
<comment type="catalytic activity">
    <reaction evidence="1">
        <text>a ribonucleoside 5'-diphosphate + ATP = a ribonucleoside 5'-triphosphate + ADP</text>
        <dbReference type="Rhea" id="RHEA:18113"/>
        <dbReference type="ChEBI" id="CHEBI:30616"/>
        <dbReference type="ChEBI" id="CHEBI:57930"/>
        <dbReference type="ChEBI" id="CHEBI:61557"/>
        <dbReference type="ChEBI" id="CHEBI:456216"/>
        <dbReference type="EC" id="2.7.4.6"/>
    </reaction>
</comment>
<comment type="cofactor">
    <cofactor evidence="1">
        <name>Mg(2+)</name>
        <dbReference type="ChEBI" id="CHEBI:18420"/>
    </cofactor>
</comment>
<comment type="subcellular location">
    <subcellularLocation>
        <location evidence="1">Cytoplasm</location>
    </subcellularLocation>
</comment>
<comment type="similarity">
    <text evidence="1">Belongs to the NDK family.</text>
</comment>
<dbReference type="EC" id="2.7.4.6" evidence="1"/>
<dbReference type="EMBL" id="AE006641">
    <property type="protein sequence ID" value="AAK40571.1"/>
    <property type="molecule type" value="Genomic_DNA"/>
</dbReference>
<dbReference type="PIR" id="D90164">
    <property type="entry name" value="D90164"/>
</dbReference>
<dbReference type="RefSeq" id="WP_009990482.1">
    <property type="nucleotide sequence ID" value="NC_002754.1"/>
</dbReference>
<dbReference type="SMR" id="Q980Q7"/>
<dbReference type="FunCoup" id="Q980Q7">
    <property type="interactions" value="321"/>
</dbReference>
<dbReference type="STRING" id="273057.SSO0230"/>
<dbReference type="PaxDb" id="273057-SSO0230"/>
<dbReference type="EnsemblBacteria" id="AAK40571">
    <property type="protein sequence ID" value="AAK40571"/>
    <property type="gene ID" value="SSO0230"/>
</dbReference>
<dbReference type="GeneID" id="44129199"/>
<dbReference type="KEGG" id="sso:SSO0230"/>
<dbReference type="PATRIC" id="fig|273057.12.peg.226"/>
<dbReference type="eggNOG" id="arCOG04313">
    <property type="taxonomic scope" value="Archaea"/>
</dbReference>
<dbReference type="HOGENOM" id="CLU_060216_6_3_2"/>
<dbReference type="InParanoid" id="Q980Q7"/>
<dbReference type="PhylomeDB" id="Q980Q7"/>
<dbReference type="Proteomes" id="UP000001974">
    <property type="component" value="Chromosome"/>
</dbReference>
<dbReference type="GO" id="GO:0005737">
    <property type="term" value="C:cytoplasm"/>
    <property type="evidence" value="ECO:0007669"/>
    <property type="project" value="UniProtKB-SubCell"/>
</dbReference>
<dbReference type="GO" id="GO:0005524">
    <property type="term" value="F:ATP binding"/>
    <property type="evidence" value="ECO:0007669"/>
    <property type="project" value="UniProtKB-UniRule"/>
</dbReference>
<dbReference type="GO" id="GO:0046872">
    <property type="term" value="F:metal ion binding"/>
    <property type="evidence" value="ECO:0007669"/>
    <property type="project" value="UniProtKB-KW"/>
</dbReference>
<dbReference type="GO" id="GO:0004550">
    <property type="term" value="F:nucleoside diphosphate kinase activity"/>
    <property type="evidence" value="ECO:0007669"/>
    <property type="project" value="UniProtKB-UniRule"/>
</dbReference>
<dbReference type="GO" id="GO:0006241">
    <property type="term" value="P:CTP biosynthetic process"/>
    <property type="evidence" value="ECO:0007669"/>
    <property type="project" value="UniProtKB-UniRule"/>
</dbReference>
<dbReference type="GO" id="GO:0006183">
    <property type="term" value="P:GTP biosynthetic process"/>
    <property type="evidence" value="ECO:0007669"/>
    <property type="project" value="UniProtKB-UniRule"/>
</dbReference>
<dbReference type="GO" id="GO:0006228">
    <property type="term" value="P:UTP biosynthetic process"/>
    <property type="evidence" value="ECO:0007669"/>
    <property type="project" value="UniProtKB-UniRule"/>
</dbReference>
<dbReference type="CDD" id="cd04413">
    <property type="entry name" value="NDPk_I"/>
    <property type="match status" value="1"/>
</dbReference>
<dbReference type="FunFam" id="3.30.70.141:FF:000003">
    <property type="entry name" value="Nucleoside diphosphate kinase"/>
    <property type="match status" value="1"/>
</dbReference>
<dbReference type="Gene3D" id="3.30.70.141">
    <property type="entry name" value="Nucleoside diphosphate kinase-like domain"/>
    <property type="match status" value="1"/>
</dbReference>
<dbReference type="HAMAP" id="MF_00451">
    <property type="entry name" value="NDP_kinase"/>
    <property type="match status" value="1"/>
</dbReference>
<dbReference type="InterPro" id="IPR034907">
    <property type="entry name" value="NDK-like_dom"/>
</dbReference>
<dbReference type="InterPro" id="IPR036850">
    <property type="entry name" value="NDK-like_dom_sf"/>
</dbReference>
<dbReference type="InterPro" id="IPR001564">
    <property type="entry name" value="Nucleoside_diP_kinase"/>
</dbReference>
<dbReference type="InterPro" id="IPR023005">
    <property type="entry name" value="Nucleoside_diP_kinase_AS"/>
</dbReference>
<dbReference type="NCBIfam" id="NF001908">
    <property type="entry name" value="PRK00668.1"/>
    <property type="match status" value="1"/>
</dbReference>
<dbReference type="PANTHER" id="PTHR11349">
    <property type="entry name" value="NUCLEOSIDE DIPHOSPHATE KINASE"/>
    <property type="match status" value="1"/>
</dbReference>
<dbReference type="Pfam" id="PF00334">
    <property type="entry name" value="NDK"/>
    <property type="match status" value="1"/>
</dbReference>
<dbReference type="PRINTS" id="PR01243">
    <property type="entry name" value="NUCDPKINASE"/>
</dbReference>
<dbReference type="SMART" id="SM00562">
    <property type="entry name" value="NDK"/>
    <property type="match status" value="1"/>
</dbReference>
<dbReference type="SUPFAM" id="SSF54919">
    <property type="entry name" value="Nucleoside diphosphate kinase, NDK"/>
    <property type="match status" value="1"/>
</dbReference>
<dbReference type="PROSITE" id="PS00469">
    <property type="entry name" value="NDPK"/>
    <property type="match status" value="1"/>
</dbReference>
<dbReference type="PROSITE" id="PS51374">
    <property type="entry name" value="NDPK_LIKE"/>
    <property type="match status" value="1"/>
</dbReference>
<gene>
    <name evidence="1" type="primary">ndk</name>
    <name type="ordered locus">SSO0230</name>
</gene>
<organism>
    <name type="scientific">Saccharolobus solfataricus (strain ATCC 35092 / DSM 1617 / JCM 11322 / P2)</name>
    <name type="common">Sulfolobus solfataricus</name>
    <dbReference type="NCBI Taxonomy" id="273057"/>
    <lineage>
        <taxon>Archaea</taxon>
        <taxon>Thermoproteota</taxon>
        <taxon>Thermoprotei</taxon>
        <taxon>Sulfolobales</taxon>
        <taxon>Sulfolobaceae</taxon>
        <taxon>Saccharolobus</taxon>
    </lineage>
</organism>